<gene>
    <name evidence="1" type="primary">rpsJ</name>
    <name type="ordered locus">MS53_0644</name>
</gene>
<dbReference type="EMBL" id="AE017245">
    <property type="protein sequence ID" value="AAZ44051.2"/>
    <property type="status" value="ALT_INIT"/>
    <property type="molecule type" value="Genomic_DNA"/>
</dbReference>
<dbReference type="RefSeq" id="WP_020003156.1">
    <property type="nucleotide sequence ID" value="NC_007294.1"/>
</dbReference>
<dbReference type="SMR" id="Q4A5C0"/>
<dbReference type="STRING" id="262723.MS53_0644"/>
<dbReference type="GeneID" id="93530434"/>
<dbReference type="KEGG" id="msy:MS53_0644"/>
<dbReference type="eggNOG" id="COG0051">
    <property type="taxonomic scope" value="Bacteria"/>
</dbReference>
<dbReference type="HOGENOM" id="CLU_122625_1_3_14"/>
<dbReference type="OrthoDB" id="9804464at2"/>
<dbReference type="Proteomes" id="UP000000549">
    <property type="component" value="Chromosome"/>
</dbReference>
<dbReference type="GO" id="GO:1990904">
    <property type="term" value="C:ribonucleoprotein complex"/>
    <property type="evidence" value="ECO:0007669"/>
    <property type="project" value="UniProtKB-KW"/>
</dbReference>
<dbReference type="GO" id="GO:0005840">
    <property type="term" value="C:ribosome"/>
    <property type="evidence" value="ECO:0007669"/>
    <property type="project" value="UniProtKB-KW"/>
</dbReference>
<dbReference type="GO" id="GO:0003735">
    <property type="term" value="F:structural constituent of ribosome"/>
    <property type="evidence" value="ECO:0007669"/>
    <property type="project" value="InterPro"/>
</dbReference>
<dbReference type="GO" id="GO:0000049">
    <property type="term" value="F:tRNA binding"/>
    <property type="evidence" value="ECO:0007669"/>
    <property type="project" value="UniProtKB-UniRule"/>
</dbReference>
<dbReference type="GO" id="GO:0006412">
    <property type="term" value="P:translation"/>
    <property type="evidence" value="ECO:0007669"/>
    <property type="project" value="UniProtKB-UniRule"/>
</dbReference>
<dbReference type="Gene3D" id="3.30.70.600">
    <property type="entry name" value="Ribosomal protein S10 domain"/>
    <property type="match status" value="1"/>
</dbReference>
<dbReference type="HAMAP" id="MF_00508">
    <property type="entry name" value="Ribosomal_uS10"/>
    <property type="match status" value="1"/>
</dbReference>
<dbReference type="InterPro" id="IPR001848">
    <property type="entry name" value="Ribosomal_uS10"/>
</dbReference>
<dbReference type="InterPro" id="IPR027486">
    <property type="entry name" value="Ribosomal_uS10_dom"/>
</dbReference>
<dbReference type="InterPro" id="IPR036838">
    <property type="entry name" value="Ribosomal_uS10_dom_sf"/>
</dbReference>
<dbReference type="NCBIfam" id="NF001861">
    <property type="entry name" value="PRK00596.1"/>
    <property type="match status" value="1"/>
</dbReference>
<dbReference type="NCBIfam" id="TIGR01049">
    <property type="entry name" value="rpsJ_bact"/>
    <property type="match status" value="1"/>
</dbReference>
<dbReference type="PANTHER" id="PTHR11700">
    <property type="entry name" value="30S RIBOSOMAL PROTEIN S10 FAMILY MEMBER"/>
    <property type="match status" value="1"/>
</dbReference>
<dbReference type="Pfam" id="PF00338">
    <property type="entry name" value="Ribosomal_S10"/>
    <property type="match status" value="1"/>
</dbReference>
<dbReference type="PRINTS" id="PR00971">
    <property type="entry name" value="RIBOSOMALS10"/>
</dbReference>
<dbReference type="SMART" id="SM01403">
    <property type="entry name" value="Ribosomal_S10"/>
    <property type="match status" value="1"/>
</dbReference>
<dbReference type="SUPFAM" id="SSF54999">
    <property type="entry name" value="Ribosomal protein S10"/>
    <property type="match status" value="1"/>
</dbReference>
<evidence type="ECO:0000255" key="1">
    <source>
        <dbReference type="HAMAP-Rule" id="MF_00508"/>
    </source>
</evidence>
<evidence type="ECO:0000305" key="2"/>
<feature type="chain" id="PRO_0000237066" description="Small ribosomal subunit protein uS10">
    <location>
        <begin position="1"/>
        <end position="101"/>
    </location>
</feature>
<reference key="1">
    <citation type="journal article" date="2005" name="J. Bacteriol.">
        <title>Swine and poultry pathogens: the complete genome sequences of two strains of Mycoplasma hyopneumoniae and a strain of Mycoplasma synoviae.</title>
        <authorList>
            <person name="Vasconcelos A.T.R."/>
            <person name="Ferreira H.B."/>
            <person name="Bizarro C.V."/>
            <person name="Bonatto S.L."/>
            <person name="Carvalho M.O."/>
            <person name="Pinto P.M."/>
            <person name="Almeida D.F."/>
            <person name="Almeida L.G.P."/>
            <person name="Almeida R."/>
            <person name="Alves-Junior L."/>
            <person name="Assuncao E.N."/>
            <person name="Azevedo V.A.C."/>
            <person name="Bogo M.R."/>
            <person name="Brigido M.M."/>
            <person name="Brocchi M."/>
            <person name="Burity H.A."/>
            <person name="Camargo A.A."/>
            <person name="Camargo S.S."/>
            <person name="Carepo M.S."/>
            <person name="Carraro D.M."/>
            <person name="de Mattos Cascardo J.C."/>
            <person name="Castro L.A."/>
            <person name="Cavalcanti G."/>
            <person name="Chemale G."/>
            <person name="Collevatti R.G."/>
            <person name="Cunha C.W."/>
            <person name="Dallagiovanna B."/>
            <person name="Dambros B.P."/>
            <person name="Dellagostin O.A."/>
            <person name="Falcao C."/>
            <person name="Fantinatti-Garboggini F."/>
            <person name="Felipe M.S.S."/>
            <person name="Fiorentin L."/>
            <person name="Franco G.R."/>
            <person name="Freitas N.S.A."/>
            <person name="Frias D."/>
            <person name="Grangeiro T.B."/>
            <person name="Grisard E.C."/>
            <person name="Guimaraes C.T."/>
            <person name="Hungria M."/>
            <person name="Jardim S.N."/>
            <person name="Krieger M.A."/>
            <person name="Laurino J.P."/>
            <person name="Lima L.F.A."/>
            <person name="Lopes M.I."/>
            <person name="Loreto E.L.S."/>
            <person name="Madeira H.M.F."/>
            <person name="Manfio G.P."/>
            <person name="Maranhao A.Q."/>
            <person name="Martinkovics C.T."/>
            <person name="Medeiros S.R.B."/>
            <person name="Moreira M.A.M."/>
            <person name="Neiva M."/>
            <person name="Ramalho-Neto C.E."/>
            <person name="Nicolas M.F."/>
            <person name="Oliveira S.C."/>
            <person name="Paixao R.F.C."/>
            <person name="Pedrosa F.O."/>
            <person name="Pena S.D.J."/>
            <person name="Pereira M."/>
            <person name="Pereira-Ferrari L."/>
            <person name="Piffer I."/>
            <person name="Pinto L.S."/>
            <person name="Potrich D.P."/>
            <person name="Salim A.C.M."/>
            <person name="Santos F.R."/>
            <person name="Schmitt R."/>
            <person name="Schneider M.P.C."/>
            <person name="Schrank A."/>
            <person name="Schrank I.S."/>
            <person name="Schuck A.F."/>
            <person name="Seuanez H.N."/>
            <person name="Silva D.W."/>
            <person name="Silva R."/>
            <person name="Silva S.C."/>
            <person name="Soares C.M.A."/>
            <person name="Souza K.R.L."/>
            <person name="Souza R.C."/>
            <person name="Staats C.C."/>
            <person name="Steffens M.B.R."/>
            <person name="Teixeira S.M.R."/>
            <person name="Urmenyi T.P."/>
            <person name="Vainstein M.H."/>
            <person name="Zuccherato L.W."/>
            <person name="Simpson A.J.G."/>
            <person name="Zaha A."/>
        </authorList>
    </citation>
    <scope>NUCLEOTIDE SEQUENCE [LARGE SCALE GENOMIC DNA]</scope>
    <source>
        <strain>53</strain>
    </source>
</reference>
<sequence>MAKTQIKVFGFDHKVVDEAAKKLVSLAVATKNKFVGPIPMPTKREEVTILRSVHVNKKSREQFESRTHQRLVVLENPSSELLDKLKRLELPAGVGLKFKEK</sequence>
<proteinExistence type="inferred from homology"/>
<organism>
    <name type="scientific">Mycoplasmopsis synoviae (strain 53)</name>
    <name type="common">Mycoplasma synoviae</name>
    <dbReference type="NCBI Taxonomy" id="262723"/>
    <lineage>
        <taxon>Bacteria</taxon>
        <taxon>Bacillati</taxon>
        <taxon>Mycoplasmatota</taxon>
        <taxon>Mycoplasmoidales</taxon>
        <taxon>Metamycoplasmataceae</taxon>
        <taxon>Mycoplasmopsis</taxon>
    </lineage>
</organism>
<keyword id="KW-1185">Reference proteome</keyword>
<keyword id="KW-0687">Ribonucleoprotein</keyword>
<keyword id="KW-0689">Ribosomal protein</keyword>
<accession>Q4A5C0</accession>
<comment type="function">
    <text evidence="1">Involved in the binding of tRNA to the ribosomes.</text>
</comment>
<comment type="subunit">
    <text evidence="1">Part of the 30S ribosomal subunit.</text>
</comment>
<comment type="similarity">
    <text evidence="1">Belongs to the universal ribosomal protein uS10 family.</text>
</comment>
<comment type="sequence caution" evidence="2">
    <conflict type="erroneous initiation">
        <sequence resource="EMBL-CDS" id="AAZ44051"/>
    </conflict>
</comment>
<protein>
    <recommendedName>
        <fullName evidence="1">Small ribosomal subunit protein uS10</fullName>
    </recommendedName>
    <alternativeName>
        <fullName evidence="2">30S ribosomal protein S10</fullName>
    </alternativeName>
</protein>
<name>RS10_MYCS5</name>